<organism>
    <name type="scientific">Streptomyces coelicolor (strain ATCC BAA-471 / A3(2) / M145)</name>
    <dbReference type="NCBI Taxonomy" id="100226"/>
    <lineage>
        <taxon>Bacteria</taxon>
        <taxon>Bacillati</taxon>
        <taxon>Actinomycetota</taxon>
        <taxon>Actinomycetes</taxon>
        <taxon>Kitasatosporales</taxon>
        <taxon>Streptomycetaceae</taxon>
        <taxon>Streptomyces</taxon>
        <taxon>Streptomyces albidoflavus group</taxon>
    </lineage>
</organism>
<feature type="chain" id="PRO_0000180256" description="Probable acyl carrier protein">
    <location>
        <begin position="1"/>
        <end position="90"/>
    </location>
</feature>
<feature type="domain" description="Carrier" evidence="1">
    <location>
        <begin position="9"/>
        <end position="90"/>
    </location>
</feature>
<feature type="modified residue" description="O-(pantetheine 4'-phosphoryl)serine" evidence="1">
    <location>
        <position position="47"/>
    </location>
</feature>
<comment type="function">
    <text>Involved in developmentally regulated synthesis of a compound biosynthetically related to polyketide antibiotics which is essential for spore color in Streptomyces coelicolor.</text>
</comment>
<comment type="PTM">
    <text evidence="2">4'-phosphopantetheine is transferred from CoA to a specific serine of the apo-ACP-like protein.</text>
</comment>
<sequence>MTDQQLDYQVTVEELSALMKRTAGVHVDPVTLRQQADDGFDTFGLDSLGLLGIVAELEKRYGLGLPEQAERCKTPADFLALVNGALKTGV</sequence>
<accession>P23153</accession>
<name>ACPW_STRCO</name>
<gene>
    <name type="ordered locus">SCO5316</name>
    <name type="ORF">SC6G9.17</name>
</gene>
<reference key="1">
    <citation type="journal article" date="1990" name="Mol. Microbiol.">
        <title>Spore colour in Streptomyces coelicolor A3(2) involves the developmentally regulated synthesis of a compound biosynthetically related to polyketide antibiotics.</title>
        <authorList>
            <person name="Davis N.K."/>
            <person name="Chater K.F."/>
            <person name="Bruton C.J."/>
        </authorList>
    </citation>
    <scope>NUCLEOTIDE SEQUENCE [GENOMIC DNA]</scope>
    <source>
        <strain>A3(2) / NRRL B-16638</strain>
    </source>
</reference>
<reference key="2">
    <citation type="journal article" date="2002" name="Nature">
        <title>Complete genome sequence of the model actinomycete Streptomyces coelicolor A3(2).</title>
        <authorList>
            <person name="Bentley S.D."/>
            <person name="Chater K.F."/>
            <person name="Cerdeno-Tarraga A.-M."/>
            <person name="Challis G.L."/>
            <person name="Thomson N.R."/>
            <person name="James K.D."/>
            <person name="Harris D.E."/>
            <person name="Quail M.A."/>
            <person name="Kieser H."/>
            <person name="Harper D."/>
            <person name="Bateman A."/>
            <person name="Brown S."/>
            <person name="Chandra G."/>
            <person name="Chen C.W."/>
            <person name="Collins M."/>
            <person name="Cronin A."/>
            <person name="Fraser A."/>
            <person name="Goble A."/>
            <person name="Hidalgo J."/>
            <person name="Hornsby T."/>
            <person name="Howarth S."/>
            <person name="Huang C.-H."/>
            <person name="Kieser T."/>
            <person name="Larke L."/>
            <person name="Murphy L.D."/>
            <person name="Oliver K."/>
            <person name="O'Neil S."/>
            <person name="Rabbinowitsch E."/>
            <person name="Rajandream M.A."/>
            <person name="Rutherford K.M."/>
            <person name="Rutter S."/>
            <person name="Seeger K."/>
            <person name="Saunders D."/>
            <person name="Sharp S."/>
            <person name="Squares R."/>
            <person name="Squares S."/>
            <person name="Taylor K."/>
            <person name="Warren T."/>
            <person name="Wietzorrek A."/>
            <person name="Woodward J.R."/>
            <person name="Barrell B.G."/>
            <person name="Parkhill J."/>
            <person name="Hopwood D.A."/>
        </authorList>
    </citation>
    <scope>NUCLEOTIDE SEQUENCE [LARGE SCALE GENOMIC DNA]</scope>
    <source>
        <strain>ATCC BAA-471 / A3(2) / M145</strain>
    </source>
</reference>
<keyword id="KW-0596">Phosphopantetheine</keyword>
<keyword id="KW-0597">Phosphoprotein</keyword>
<keyword id="KW-1185">Reference proteome</keyword>
<protein>
    <recommendedName>
        <fullName>Probable acyl carrier protein</fullName>
        <shortName>ACP</shortName>
    </recommendedName>
    <alternativeName>
        <fullName>WhiE ORF V</fullName>
    </alternativeName>
</protein>
<evidence type="ECO:0000255" key="1">
    <source>
        <dbReference type="PROSITE-ProRule" id="PRU00258"/>
    </source>
</evidence>
<evidence type="ECO:0000305" key="2"/>
<proteinExistence type="inferred from homology"/>
<dbReference type="EMBL" id="X55942">
    <property type="protein sequence ID" value="CAA39410.1"/>
    <property type="molecule type" value="Genomic_DNA"/>
</dbReference>
<dbReference type="EMBL" id="AL939123">
    <property type="protein sequence ID" value="CAB45608.1"/>
    <property type="molecule type" value="Genomic_DNA"/>
</dbReference>
<dbReference type="PIR" id="S11976">
    <property type="entry name" value="S11976"/>
</dbReference>
<dbReference type="RefSeq" id="NP_629458.1">
    <property type="nucleotide sequence ID" value="NC_003888.3"/>
</dbReference>
<dbReference type="RefSeq" id="WP_011030170.1">
    <property type="nucleotide sequence ID" value="NZ_VNID01000040.1"/>
</dbReference>
<dbReference type="SMR" id="P23153"/>
<dbReference type="STRING" id="100226.gene:17762966"/>
<dbReference type="PaxDb" id="100226-SCO5316"/>
<dbReference type="KEGG" id="sco:SCO5316"/>
<dbReference type="PATRIC" id="fig|100226.15.peg.5402"/>
<dbReference type="eggNOG" id="COG0236">
    <property type="taxonomic scope" value="Bacteria"/>
</dbReference>
<dbReference type="HOGENOM" id="CLU_108696_12_1_11"/>
<dbReference type="InParanoid" id="P23153"/>
<dbReference type="OrthoDB" id="3215648at2"/>
<dbReference type="PhylomeDB" id="P23153"/>
<dbReference type="Proteomes" id="UP000001973">
    <property type="component" value="Chromosome"/>
</dbReference>
<dbReference type="Gene3D" id="1.10.1200.10">
    <property type="entry name" value="ACP-like"/>
    <property type="match status" value="1"/>
</dbReference>
<dbReference type="InterPro" id="IPR036736">
    <property type="entry name" value="ACP-like_sf"/>
</dbReference>
<dbReference type="InterPro" id="IPR009081">
    <property type="entry name" value="PP-bd_ACP"/>
</dbReference>
<dbReference type="InterPro" id="IPR006162">
    <property type="entry name" value="Ppantetheine_attach_site"/>
</dbReference>
<dbReference type="Pfam" id="PF00550">
    <property type="entry name" value="PP-binding"/>
    <property type="match status" value="1"/>
</dbReference>
<dbReference type="SUPFAM" id="SSF47336">
    <property type="entry name" value="ACP-like"/>
    <property type="match status" value="1"/>
</dbReference>
<dbReference type="PROSITE" id="PS50075">
    <property type="entry name" value="CARRIER"/>
    <property type="match status" value="1"/>
</dbReference>
<dbReference type="PROSITE" id="PS00012">
    <property type="entry name" value="PHOSPHOPANTETHEINE"/>
    <property type="match status" value="1"/>
</dbReference>